<gene>
    <name evidence="1" type="primary">glsA</name>
    <name type="ordered locus">PFLU_3587</name>
</gene>
<evidence type="ECO:0000255" key="1">
    <source>
        <dbReference type="HAMAP-Rule" id="MF_00313"/>
    </source>
</evidence>
<accession>C3JXF9</accession>
<dbReference type="EC" id="3.5.1.2" evidence="1"/>
<dbReference type="EMBL" id="AM181176">
    <property type="protein sequence ID" value="CAY49806.1"/>
    <property type="molecule type" value="Genomic_DNA"/>
</dbReference>
<dbReference type="SMR" id="C3JXF9"/>
<dbReference type="STRING" id="294.SRM1_03182"/>
<dbReference type="eggNOG" id="COG2066">
    <property type="taxonomic scope" value="Bacteria"/>
</dbReference>
<dbReference type="HOGENOM" id="CLU_027932_1_1_6"/>
<dbReference type="OrthoDB" id="9788822at2"/>
<dbReference type="GO" id="GO:0004359">
    <property type="term" value="F:glutaminase activity"/>
    <property type="evidence" value="ECO:0007669"/>
    <property type="project" value="UniProtKB-UniRule"/>
</dbReference>
<dbReference type="GO" id="GO:0006537">
    <property type="term" value="P:glutamate biosynthetic process"/>
    <property type="evidence" value="ECO:0007669"/>
    <property type="project" value="TreeGrafter"/>
</dbReference>
<dbReference type="GO" id="GO:0006543">
    <property type="term" value="P:glutamine catabolic process"/>
    <property type="evidence" value="ECO:0007669"/>
    <property type="project" value="TreeGrafter"/>
</dbReference>
<dbReference type="FunFam" id="3.40.710.10:FF:000005">
    <property type="entry name" value="Glutaminase"/>
    <property type="match status" value="1"/>
</dbReference>
<dbReference type="Gene3D" id="3.40.710.10">
    <property type="entry name" value="DD-peptidase/beta-lactamase superfamily"/>
    <property type="match status" value="1"/>
</dbReference>
<dbReference type="HAMAP" id="MF_00313">
    <property type="entry name" value="Glutaminase"/>
    <property type="match status" value="1"/>
</dbReference>
<dbReference type="InterPro" id="IPR012338">
    <property type="entry name" value="Beta-lactam/transpept-like"/>
</dbReference>
<dbReference type="InterPro" id="IPR015868">
    <property type="entry name" value="Glutaminase"/>
</dbReference>
<dbReference type="NCBIfam" id="TIGR03814">
    <property type="entry name" value="Gln_ase"/>
    <property type="match status" value="1"/>
</dbReference>
<dbReference type="NCBIfam" id="NF002132">
    <property type="entry name" value="PRK00971.1-1"/>
    <property type="match status" value="1"/>
</dbReference>
<dbReference type="NCBIfam" id="NF002133">
    <property type="entry name" value="PRK00971.1-2"/>
    <property type="match status" value="1"/>
</dbReference>
<dbReference type="PANTHER" id="PTHR12544">
    <property type="entry name" value="GLUTAMINASE"/>
    <property type="match status" value="1"/>
</dbReference>
<dbReference type="PANTHER" id="PTHR12544:SF29">
    <property type="entry name" value="GLUTAMINASE"/>
    <property type="match status" value="1"/>
</dbReference>
<dbReference type="Pfam" id="PF04960">
    <property type="entry name" value="Glutaminase"/>
    <property type="match status" value="1"/>
</dbReference>
<dbReference type="SUPFAM" id="SSF56601">
    <property type="entry name" value="beta-lactamase/transpeptidase-like"/>
    <property type="match status" value="1"/>
</dbReference>
<feature type="chain" id="PRO_1000205063" description="Glutaminase">
    <location>
        <begin position="1"/>
        <end position="302"/>
    </location>
</feature>
<feature type="binding site" evidence="1">
    <location>
        <position position="61"/>
    </location>
    <ligand>
        <name>substrate</name>
    </ligand>
</feature>
<feature type="binding site" evidence="1">
    <location>
        <position position="111"/>
    </location>
    <ligand>
        <name>substrate</name>
    </ligand>
</feature>
<feature type="binding site" evidence="1">
    <location>
        <position position="155"/>
    </location>
    <ligand>
        <name>substrate</name>
    </ligand>
</feature>
<feature type="binding site" evidence="1">
    <location>
        <position position="162"/>
    </location>
    <ligand>
        <name>substrate</name>
    </ligand>
</feature>
<feature type="binding site" evidence="1">
    <location>
        <position position="186"/>
    </location>
    <ligand>
        <name>substrate</name>
    </ligand>
</feature>
<feature type="binding site" evidence="1">
    <location>
        <position position="238"/>
    </location>
    <ligand>
        <name>substrate</name>
    </ligand>
</feature>
<feature type="binding site" evidence="1">
    <location>
        <position position="256"/>
    </location>
    <ligand>
        <name>substrate</name>
    </ligand>
</feature>
<keyword id="KW-0378">Hydrolase</keyword>
<reference key="1">
    <citation type="journal article" date="2009" name="Genome Biol.">
        <title>Genomic and genetic analyses of diversity and plant interactions of Pseudomonas fluorescens.</title>
        <authorList>
            <person name="Silby M.W."/>
            <person name="Cerdeno-Tarraga A.M."/>
            <person name="Vernikos G.S."/>
            <person name="Giddens S.R."/>
            <person name="Jackson R.W."/>
            <person name="Preston G.M."/>
            <person name="Zhang X.-X."/>
            <person name="Moon C.D."/>
            <person name="Gehrig S.M."/>
            <person name="Godfrey S.A.C."/>
            <person name="Knight C.G."/>
            <person name="Malone J.G."/>
            <person name="Robinson Z."/>
            <person name="Spiers A.J."/>
            <person name="Harris S."/>
            <person name="Challis G.L."/>
            <person name="Yaxley A.M."/>
            <person name="Harris D."/>
            <person name="Seeger K."/>
            <person name="Murphy L."/>
            <person name="Rutter S."/>
            <person name="Squares R."/>
            <person name="Quail M.A."/>
            <person name="Saunders E."/>
            <person name="Mavromatis K."/>
            <person name="Brettin T.S."/>
            <person name="Bentley S.D."/>
            <person name="Hothersall J."/>
            <person name="Stephens E."/>
            <person name="Thomas C.M."/>
            <person name="Parkhill J."/>
            <person name="Levy S.B."/>
            <person name="Rainey P.B."/>
            <person name="Thomson N.R."/>
        </authorList>
    </citation>
    <scope>NUCLEOTIDE SEQUENCE [LARGE SCALE GENOMIC DNA]</scope>
    <source>
        <strain>SBW25</strain>
    </source>
</reference>
<name>GLSA_PSEFS</name>
<comment type="catalytic activity">
    <reaction evidence="1">
        <text>L-glutamine + H2O = L-glutamate + NH4(+)</text>
        <dbReference type="Rhea" id="RHEA:15889"/>
        <dbReference type="ChEBI" id="CHEBI:15377"/>
        <dbReference type="ChEBI" id="CHEBI:28938"/>
        <dbReference type="ChEBI" id="CHEBI:29985"/>
        <dbReference type="ChEBI" id="CHEBI:58359"/>
        <dbReference type="EC" id="3.5.1.2"/>
    </reaction>
</comment>
<comment type="subunit">
    <text evidence="1">Homotetramer.</text>
</comment>
<comment type="similarity">
    <text evidence="1">Belongs to the glutaminase family.</text>
</comment>
<protein>
    <recommendedName>
        <fullName evidence="1">Glutaminase</fullName>
        <ecNumber evidence="1">3.5.1.2</ecNumber>
    </recommendedName>
</protein>
<sequence length="302" mass="32403">MQAMLSSILDEVRPLIGLGKVADYIPALADVPANQLGIAVYGNDGSAYRAGDADTLFSVQSISKVFSLVQAIDHGGETIWERLGHEPSGQPFNSMVQLEFERGRPRNPFINAGALVICDINQSRFAVPILSMRDFVRRLSGNPHILVNSVVAESEAQHGARNAAMAYLMKSFGNFHNDVDAVLHSYFNYCALQMSCVDLAKAFSFLANEGTSAHSGEQILTARQTRQVNSIMATSGLYDEAGNFAYRVGLPGKSGVGGGIVAVVPGQFTVCVWSPELNAAGNSLAGMKALELLSERIGWSVF</sequence>
<organism>
    <name type="scientific">Pseudomonas fluorescens (strain SBW25)</name>
    <dbReference type="NCBI Taxonomy" id="216595"/>
    <lineage>
        <taxon>Bacteria</taxon>
        <taxon>Pseudomonadati</taxon>
        <taxon>Pseudomonadota</taxon>
        <taxon>Gammaproteobacteria</taxon>
        <taxon>Pseudomonadales</taxon>
        <taxon>Pseudomonadaceae</taxon>
        <taxon>Pseudomonas</taxon>
    </lineage>
</organism>
<proteinExistence type="inferred from homology"/>